<protein>
    <recommendedName>
        <fullName evidence="1">Chaperone protein HtpG</fullName>
    </recommendedName>
    <alternativeName>
        <fullName evidence="1">Heat shock protein HtpG</fullName>
    </alternativeName>
    <alternativeName>
        <fullName evidence="1">High temperature protein G</fullName>
    </alternativeName>
</protein>
<accession>Q47XA7</accession>
<proteinExistence type="inferred from homology"/>
<dbReference type="EMBL" id="CP000083">
    <property type="protein sequence ID" value="AAZ28374.1"/>
    <property type="molecule type" value="Genomic_DNA"/>
</dbReference>
<dbReference type="RefSeq" id="WP_011044649.1">
    <property type="nucleotide sequence ID" value="NC_003910.7"/>
</dbReference>
<dbReference type="SMR" id="Q47XA7"/>
<dbReference type="STRING" id="167879.CPS_3901"/>
<dbReference type="KEGG" id="cps:CPS_3901"/>
<dbReference type="eggNOG" id="COG0326">
    <property type="taxonomic scope" value="Bacteria"/>
</dbReference>
<dbReference type="HOGENOM" id="CLU_006684_3_0_6"/>
<dbReference type="Proteomes" id="UP000000547">
    <property type="component" value="Chromosome"/>
</dbReference>
<dbReference type="GO" id="GO:0005737">
    <property type="term" value="C:cytoplasm"/>
    <property type="evidence" value="ECO:0007669"/>
    <property type="project" value="UniProtKB-SubCell"/>
</dbReference>
<dbReference type="GO" id="GO:0005524">
    <property type="term" value="F:ATP binding"/>
    <property type="evidence" value="ECO:0007669"/>
    <property type="project" value="UniProtKB-UniRule"/>
</dbReference>
<dbReference type="GO" id="GO:0016887">
    <property type="term" value="F:ATP hydrolysis activity"/>
    <property type="evidence" value="ECO:0007669"/>
    <property type="project" value="InterPro"/>
</dbReference>
<dbReference type="GO" id="GO:0140662">
    <property type="term" value="F:ATP-dependent protein folding chaperone"/>
    <property type="evidence" value="ECO:0007669"/>
    <property type="project" value="InterPro"/>
</dbReference>
<dbReference type="GO" id="GO:0051082">
    <property type="term" value="F:unfolded protein binding"/>
    <property type="evidence" value="ECO:0007669"/>
    <property type="project" value="UniProtKB-UniRule"/>
</dbReference>
<dbReference type="CDD" id="cd16927">
    <property type="entry name" value="HATPase_Hsp90-like"/>
    <property type="match status" value="1"/>
</dbReference>
<dbReference type="FunFam" id="3.30.230.80:FF:000002">
    <property type="entry name" value="Molecular chaperone HtpG"/>
    <property type="match status" value="1"/>
</dbReference>
<dbReference type="FunFam" id="3.30.565.10:FF:000009">
    <property type="entry name" value="Molecular chaperone HtpG"/>
    <property type="match status" value="1"/>
</dbReference>
<dbReference type="Gene3D" id="3.30.230.80">
    <property type="match status" value="1"/>
</dbReference>
<dbReference type="Gene3D" id="3.40.50.11260">
    <property type="match status" value="1"/>
</dbReference>
<dbReference type="Gene3D" id="1.20.120.790">
    <property type="entry name" value="Heat shock protein 90, C-terminal domain"/>
    <property type="match status" value="1"/>
</dbReference>
<dbReference type="Gene3D" id="3.30.565.10">
    <property type="entry name" value="Histidine kinase-like ATPase, C-terminal domain"/>
    <property type="match status" value="1"/>
</dbReference>
<dbReference type="HAMAP" id="MF_00505">
    <property type="entry name" value="HSP90"/>
    <property type="match status" value="1"/>
</dbReference>
<dbReference type="InterPro" id="IPR036890">
    <property type="entry name" value="HATPase_C_sf"/>
</dbReference>
<dbReference type="InterPro" id="IPR019805">
    <property type="entry name" value="Heat_shock_protein_90_CS"/>
</dbReference>
<dbReference type="InterPro" id="IPR037196">
    <property type="entry name" value="HSP90_C"/>
</dbReference>
<dbReference type="InterPro" id="IPR001404">
    <property type="entry name" value="Hsp90_fam"/>
</dbReference>
<dbReference type="InterPro" id="IPR020575">
    <property type="entry name" value="Hsp90_N"/>
</dbReference>
<dbReference type="InterPro" id="IPR020568">
    <property type="entry name" value="Ribosomal_Su5_D2-typ_SF"/>
</dbReference>
<dbReference type="NCBIfam" id="NF003555">
    <property type="entry name" value="PRK05218.1"/>
    <property type="match status" value="1"/>
</dbReference>
<dbReference type="PANTHER" id="PTHR11528">
    <property type="entry name" value="HEAT SHOCK PROTEIN 90 FAMILY MEMBER"/>
    <property type="match status" value="1"/>
</dbReference>
<dbReference type="Pfam" id="PF13589">
    <property type="entry name" value="HATPase_c_3"/>
    <property type="match status" value="1"/>
</dbReference>
<dbReference type="Pfam" id="PF00183">
    <property type="entry name" value="HSP90"/>
    <property type="match status" value="1"/>
</dbReference>
<dbReference type="PIRSF" id="PIRSF002583">
    <property type="entry name" value="Hsp90"/>
    <property type="match status" value="1"/>
</dbReference>
<dbReference type="PRINTS" id="PR00775">
    <property type="entry name" value="HEATSHOCK90"/>
</dbReference>
<dbReference type="SMART" id="SM00387">
    <property type="entry name" value="HATPase_c"/>
    <property type="match status" value="1"/>
</dbReference>
<dbReference type="SUPFAM" id="SSF55874">
    <property type="entry name" value="ATPase domain of HSP90 chaperone/DNA topoisomerase II/histidine kinase"/>
    <property type="match status" value="1"/>
</dbReference>
<dbReference type="SUPFAM" id="SSF110942">
    <property type="entry name" value="HSP90 C-terminal domain"/>
    <property type="match status" value="1"/>
</dbReference>
<dbReference type="SUPFAM" id="SSF54211">
    <property type="entry name" value="Ribosomal protein S5 domain 2-like"/>
    <property type="match status" value="1"/>
</dbReference>
<dbReference type="PROSITE" id="PS00298">
    <property type="entry name" value="HSP90"/>
    <property type="match status" value="1"/>
</dbReference>
<comment type="function">
    <text evidence="1">Molecular chaperone. Has ATPase activity.</text>
</comment>
<comment type="subunit">
    <text evidence="1">Homodimer.</text>
</comment>
<comment type="subcellular location">
    <subcellularLocation>
        <location evidence="1">Cytoplasm</location>
    </subcellularLocation>
</comment>
<comment type="similarity">
    <text evidence="1">Belongs to the heat shock protein 90 family.</text>
</comment>
<reference key="1">
    <citation type="journal article" date="2005" name="Proc. Natl. Acad. Sci. U.S.A.">
        <title>The psychrophilic lifestyle as revealed by the genome sequence of Colwellia psychrerythraea 34H through genomic and proteomic analyses.</title>
        <authorList>
            <person name="Methe B.A."/>
            <person name="Nelson K.E."/>
            <person name="Deming J.W."/>
            <person name="Momen B."/>
            <person name="Melamud E."/>
            <person name="Zhang X."/>
            <person name="Moult J."/>
            <person name="Madupu R."/>
            <person name="Nelson W.C."/>
            <person name="Dodson R.J."/>
            <person name="Brinkac L.M."/>
            <person name="Daugherty S.C."/>
            <person name="Durkin A.S."/>
            <person name="DeBoy R.T."/>
            <person name="Kolonay J.F."/>
            <person name="Sullivan S.A."/>
            <person name="Zhou L."/>
            <person name="Davidsen T.M."/>
            <person name="Wu M."/>
            <person name="Huston A.L."/>
            <person name="Lewis M."/>
            <person name="Weaver B."/>
            <person name="Weidman J.F."/>
            <person name="Khouri H."/>
            <person name="Utterback T.R."/>
            <person name="Feldblyum T.V."/>
            <person name="Fraser C.M."/>
        </authorList>
    </citation>
    <scope>NUCLEOTIDE SEQUENCE [LARGE SCALE GENOMIC DNA]</scope>
    <source>
        <strain>34H / ATCC BAA-681</strain>
    </source>
</reference>
<organism>
    <name type="scientific">Colwellia psychrerythraea (strain 34H / ATCC BAA-681)</name>
    <name type="common">Vibrio psychroerythus</name>
    <dbReference type="NCBI Taxonomy" id="167879"/>
    <lineage>
        <taxon>Bacteria</taxon>
        <taxon>Pseudomonadati</taxon>
        <taxon>Pseudomonadota</taxon>
        <taxon>Gammaproteobacteria</taxon>
        <taxon>Alteromonadales</taxon>
        <taxon>Colwelliaceae</taxon>
        <taxon>Colwellia</taxon>
    </lineage>
</organism>
<keyword id="KW-0067">ATP-binding</keyword>
<keyword id="KW-0143">Chaperone</keyword>
<keyword id="KW-0963">Cytoplasm</keyword>
<keyword id="KW-0547">Nucleotide-binding</keyword>
<keyword id="KW-0346">Stress response</keyword>
<name>HTPG_COLP3</name>
<feature type="chain" id="PRO_0000224202" description="Chaperone protein HtpG">
    <location>
        <begin position="1"/>
        <end position="653"/>
    </location>
</feature>
<feature type="region of interest" description="A; substrate-binding" evidence="1">
    <location>
        <begin position="1"/>
        <end position="361"/>
    </location>
</feature>
<feature type="region of interest" description="B" evidence="1">
    <location>
        <begin position="362"/>
        <end position="578"/>
    </location>
</feature>
<feature type="region of interest" description="C" evidence="1">
    <location>
        <begin position="579"/>
        <end position="653"/>
    </location>
</feature>
<gene>
    <name evidence="1" type="primary">htpG</name>
    <name type="ordered locus">CPS_3901</name>
</gene>
<sequence length="653" mass="73392">MSETNQVQNHAFASDNAKILQLMIHSLYSNKEIFLRELVSNAADAADKLRFKALSDNTLYENDGDLRVRVSCDKENNTLTISDNGIGMNVDEVIEHLGTIAKSGTAEFFSQLSGDQASDSQLIGQFGVGFYSAFIVADKVTVRTRKAGDSATDGVEWISAGEGEFTTAKIEKTNRGTDIILHLKEDESEYADDWRLKSIVTKYSDHISVSVEMLTAEVPAVEAVAEVTDEKDNVTRPAADAVDAIPALWEPVNKATALWTREKADITDEEYKEFYKHVSHDFGDPLLWEHNRVEGKTEYTSLLYVPTKAPFDMYNREKQHGLKLFVQRVFIMDDAEQFMPTYLRFVKGLLDSNDLPLNVSREILQDNKVTQAIRKGCTKRVLKMLEKLGNKDADKYQGFWDEFGQVLKEGPAEDHANKEQVAGLLRFASTHEDSTTQNVSLASYIERMKEGQDKIYFVVADSFEAAKNSPHLEVFRKKGIEVLLMSDRIDEWLVSHLTEFDGKQLQSVTRGGLDLGDMDDAETKEAQEKLEKEYDSVVKRIKASLDGKVKEVKLSQRLTDSPACIVADDDDMSSQMAKLMASVGQEVPDTLPIFEINGEHALVKHVADEQDDDMFNQWVEVLFEQAMLAERGSLKDPASFVSRLNKLMLSLTK</sequence>
<evidence type="ECO:0000255" key="1">
    <source>
        <dbReference type="HAMAP-Rule" id="MF_00505"/>
    </source>
</evidence>